<sequence length="205" mass="23749">MRSRRGLLIVLSRPSGVGKGTVRKELFSHEDTRFQYSISVTTRKPREGEVDGVDYFFKEREEFEEMIRNEKLLEWAEFVGNYYGTPIDYVEKTLQEGKDVFLEIEVQGAIQVKKAFPEGVFIFLAPPSLSELKSRIVGRGTETEDVIENRLTVAKEEIEMMDAYDYVVENDQVELACDRIKAIVVGEHCRRERVAKYYKEMTEGL</sequence>
<comment type="function">
    <text evidence="1">Essential for recycling GMP and indirectly, cGMP.</text>
</comment>
<comment type="catalytic activity">
    <reaction evidence="1">
        <text>GMP + ATP = GDP + ADP</text>
        <dbReference type="Rhea" id="RHEA:20780"/>
        <dbReference type="ChEBI" id="CHEBI:30616"/>
        <dbReference type="ChEBI" id="CHEBI:58115"/>
        <dbReference type="ChEBI" id="CHEBI:58189"/>
        <dbReference type="ChEBI" id="CHEBI:456216"/>
        <dbReference type="EC" id="2.7.4.8"/>
    </reaction>
</comment>
<comment type="subcellular location">
    <subcellularLocation>
        <location evidence="1">Cytoplasm</location>
    </subcellularLocation>
</comment>
<comment type="similarity">
    <text evidence="1">Belongs to the guanylate kinase family.</text>
</comment>
<protein>
    <recommendedName>
        <fullName evidence="1">Guanylate kinase</fullName>
        <ecNumber evidence="1">2.7.4.8</ecNumber>
    </recommendedName>
    <alternativeName>
        <fullName evidence="1">GMP kinase</fullName>
    </alternativeName>
</protein>
<dbReference type="EC" id="2.7.4.8" evidence="1"/>
<dbReference type="EMBL" id="AE016877">
    <property type="protein sequence ID" value="AAP10791.1"/>
    <property type="molecule type" value="Genomic_DNA"/>
</dbReference>
<dbReference type="RefSeq" id="NP_833590.1">
    <property type="nucleotide sequence ID" value="NC_004722.1"/>
</dbReference>
<dbReference type="RefSeq" id="WP_001257745.1">
    <property type="nucleotide sequence ID" value="NC_004722.1"/>
</dbReference>
<dbReference type="SMR" id="Q819T6"/>
<dbReference type="STRING" id="226900.BC_3869"/>
<dbReference type="KEGG" id="bce:BC3869"/>
<dbReference type="PATRIC" id="fig|226900.8.peg.3988"/>
<dbReference type="HOGENOM" id="CLU_001715_1_2_9"/>
<dbReference type="Proteomes" id="UP000001417">
    <property type="component" value="Chromosome"/>
</dbReference>
<dbReference type="GO" id="GO:0005829">
    <property type="term" value="C:cytosol"/>
    <property type="evidence" value="ECO:0000318"/>
    <property type="project" value="GO_Central"/>
</dbReference>
<dbReference type="GO" id="GO:0005524">
    <property type="term" value="F:ATP binding"/>
    <property type="evidence" value="ECO:0007669"/>
    <property type="project" value="UniProtKB-UniRule"/>
</dbReference>
<dbReference type="GO" id="GO:0004385">
    <property type="term" value="F:guanylate kinase activity"/>
    <property type="evidence" value="ECO:0000318"/>
    <property type="project" value="GO_Central"/>
</dbReference>
<dbReference type="CDD" id="cd00071">
    <property type="entry name" value="GMPK"/>
    <property type="match status" value="1"/>
</dbReference>
<dbReference type="FunFam" id="3.40.50.300:FF:000855">
    <property type="entry name" value="Guanylate kinase"/>
    <property type="match status" value="1"/>
</dbReference>
<dbReference type="FunFam" id="3.30.63.10:FF:000002">
    <property type="entry name" value="Guanylate kinase 1"/>
    <property type="match status" value="1"/>
</dbReference>
<dbReference type="Gene3D" id="3.30.63.10">
    <property type="entry name" value="Guanylate Kinase phosphate binding domain"/>
    <property type="match status" value="1"/>
</dbReference>
<dbReference type="Gene3D" id="3.40.50.300">
    <property type="entry name" value="P-loop containing nucleotide triphosphate hydrolases"/>
    <property type="match status" value="1"/>
</dbReference>
<dbReference type="HAMAP" id="MF_00328">
    <property type="entry name" value="Guanylate_kinase"/>
    <property type="match status" value="1"/>
</dbReference>
<dbReference type="InterPro" id="IPR008145">
    <property type="entry name" value="GK/Ca_channel_bsu"/>
</dbReference>
<dbReference type="InterPro" id="IPR008144">
    <property type="entry name" value="Guanylate_kin-like_dom"/>
</dbReference>
<dbReference type="InterPro" id="IPR017665">
    <property type="entry name" value="Guanylate_kinase"/>
</dbReference>
<dbReference type="InterPro" id="IPR020590">
    <property type="entry name" value="Guanylate_kinase_CS"/>
</dbReference>
<dbReference type="InterPro" id="IPR027417">
    <property type="entry name" value="P-loop_NTPase"/>
</dbReference>
<dbReference type="NCBIfam" id="TIGR03263">
    <property type="entry name" value="guanyl_kin"/>
    <property type="match status" value="1"/>
</dbReference>
<dbReference type="PANTHER" id="PTHR23117:SF13">
    <property type="entry name" value="GUANYLATE KINASE"/>
    <property type="match status" value="1"/>
</dbReference>
<dbReference type="PANTHER" id="PTHR23117">
    <property type="entry name" value="GUANYLATE KINASE-RELATED"/>
    <property type="match status" value="1"/>
</dbReference>
<dbReference type="Pfam" id="PF00625">
    <property type="entry name" value="Guanylate_kin"/>
    <property type="match status" value="1"/>
</dbReference>
<dbReference type="SMART" id="SM00072">
    <property type="entry name" value="GuKc"/>
    <property type="match status" value="1"/>
</dbReference>
<dbReference type="SUPFAM" id="SSF52540">
    <property type="entry name" value="P-loop containing nucleoside triphosphate hydrolases"/>
    <property type="match status" value="1"/>
</dbReference>
<dbReference type="PROSITE" id="PS00856">
    <property type="entry name" value="GUANYLATE_KINASE_1"/>
    <property type="match status" value="1"/>
</dbReference>
<dbReference type="PROSITE" id="PS50052">
    <property type="entry name" value="GUANYLATE_KINASE_2"/>
    <property type="match status" value="1"/>
</dbReference>
<proteinExistence type="inferred from homology"/>
<accession>Q819T6</accession>
<evidence type="ECO:0000255" key="1">
    <source>
        <dbReference type="HAMAP-Rule" id="MF_00328"/>
    </source>
</evidence>
<name>KGUA_BACCR</name>
<organism>
    <name type="scientific">Bacillus cereus (strain ATCC 14579 / DSM 31 / CCUG 7414 / JCM 2152 / NBRC 15305 / NCIMB 9373 / NCTC 2599 / NRRL B-3711)</name>
    <dbReference type="NCBI Taxonomy" id="226900"/>
    <lineage>
        <taxon>Bacteria</taxon>
        <taxon>Bacillati</taxon>
        <taxon>Bacillota</taxon>
        <taxon>Bacilli</taxon>
        <taxon>Bacillales</taxon>
        <taxon>Bacillaceae</taxon>
        <taxon>Bacillus</taxon>
        <taxon>Bacillus cereus group</taxon>
    </lineage>
</organism>
<keyword id="KW-0067">ATP-binding</keyword>
<keyword id="KW-0963">Cytoplasm</keyword>
<keyword id="KW-0418">Kinase</keyword>
<keyword id="KW-0547">Nucleotide-binding</keyword>
<keyword id="KW-1185">Reference proteome</keyword>
<keyword id="KW-0808">Transferase</keyword>
<reference key="1">
    <citation type="journal article" date="2003" name="Nature">
        <title>Genome sequence of Bacillus cereus and comparative analysis with Bacillus anthracis.</title>
        <authorList>
            <person name="Ivanova N."/>
            <person name="Sorokin A."/>
            <person name="Anderson I."/>
            <person name="Galleron N."/>
            <person name="Candelon B."/>
            <person name="Kapatral V."/>
            <person name="Bhattacharyya A."/>
            <person name="Reznik G."/>
            <person name="Mikhailova N."/>
            <person name="Lapidus A."/>
            <person name="Chu L."/>
            <person name="Mazur M."/>
            <person name="Goltsman E."/>
            <person name="Larsen N."/>
            <person name="D'Souza M."/>
            <person name="Walunas T."/>
            <person name="Grechkin Y."/>
            <person name="Pusch G."/>
            <person name="Haselkorn R."/>
            <person name="Fonstein M."/>
            <person name="Ehrlich S.D."/>
            <person name="Overbeek R."/>
            <person name="Kyrpides N.C."/>
        </authorList>
    </citation>
    <scope>NUCLEOTIDE SEQUENCE [LARGE SCALE GENOMIC DNA]</scope>
    <source>
        <strain>ATCC 14579 / DSM 31 / CCUG 7414 / JCM 2152 / NBRC 15305 / NCIMB 9373 / NCTC 2599 / NRRL B-3711</strain>
    </source>
</reference>
<gene>
    <name evidence="1" type="primary">gmk</name>
    <name type="ordered locus">BC_3869</name>
</gene>
<feature type="chain" id="PRO_0000170492" description="Guanylate kinase">
    <location>
        <begin position="1"/>
        <end position="205"/>
    </location>
</feature>
<feature type="domain" description="Guanylate kinase-like" evidence="1">
    <location>
        <begin position="6"/>
        <end position="185"/>
    </location>
</feature>
<feature type="binding site" evidence="1">
    <location>
        <begin position="13"/>
        <end position="20"/>
    </location>
    <ligand>
        <name>ATP</name>
        <dbReference type="ChEBI" id="CHEBI:30616"/>
    </ligand>
</feature>